<proteinExistence type="inferred from homology"/>
<evidence type="ECO:0000255" key="1">
    <source>
        <dbReference type="HAMAP-Rule" id="MF_01363"/>
    </source>
</evidence>
<evidence type="ECO:0000256" key="2">
    <source>
        <dbReference type="SAM" id="MobiDB-lite"/>
    </source>
</evidence>
<evidence type="ECO:0000305" key="3"/>
<keyword id="KW-0687">Ribonucleoprotein</keyword>
<keyword id="KW-0689">Ribosomal protein</keyword>
<keyword id="KW-0694">RNA-binding</keyword>
<keyword id="KW-0699">rRNA-binding</keyword>
<comment type="function">
    <text evidence="1">This protein binds to 23S rRNA in the presence of protein L20.</text>
</comment>
<comment type="subunit">
    <text evidence="1">Part of the 50S ribosomal subunit. Contacts protein L20.</text>
</comment>
<comment type="similarity">
    <text evidence="1">Belongs to the bacterial ribosomal protein bL21 family.</text>
</comment>
<comment type="sequence caution" evidence="3">
    <conflict type="erroneous initiation">
        <sequence resource="EMBL-CDS" id="ABG64832"/>
    </conflict>
</comment>
<name>RL21_CHESB</name>
<gene>
    <name evidence="1" type="primary">rplU</name>
    <name type="ordered locus">Meso_3461</name>
</gene>
<dbReference type="EMBL" id="CP000390">
    <property type="protein sequence ID" value="ABG64832.1"/>
    <property type="status" value="ALT_INIT"/>
    <property type="molecule type" value="Genomic_DNA"/>
</dbReference>
<dbReference type="SMR" id="Q11CP3"/>
<dbReference type="STRING" id="266779.Meso_3461"/>
<dbReference type="KEGG" id="mes:Meso_3461"/>
<dbReference type="eggNOG" id="COG0261">
    <property type="taxonomic scope" value="Bacteria"/>
</dbReference>
<dbReference type="eggNOG" id="COG3743">
    <property type="taxonomic scope" value="Bacteria"/>
</dbReference>
<dbReference type="HOGENOM" id="CLU_061463_1_0_5"/>
<dbReference type="OrthoDB" id="9813334at2"/>
<dbReference type="GO" id="GO:0005737">
    <property type="term" value="C:cytoplasm"/>
    <property type="evidence" value="ECO:0007669"/>
    <property type="project" value="UniProtKB-ARBA"/>
</dbReference>
<dbReference type="GO" id="GO:1990904">
    <property type="term" value="C:ribonucleoprotein complex"/>
    <property type="evidence" value="ECO:0007669"/>
    <property type="project" value="UniProtKB-KW"/>
</dbReference>
<dbReference type="GO" id="GO:0005840">
    <property type="term" value="C:ribosome"/>
    <property type="evidence" value="ECO:0007669"/>
    <property type="project" value="UniProtKB-KW"/>
</dbReference>
<dbReference type="GO" id="GO:0019843">
    <property type="term" value="F:rRNA binding"/>
    <property type="evidence" value="ECO:0007669"/>
    <property type="project" value="UniProtKB-UniRule"/>
</dbReference>
<dbReference type="GO" id="GO:0003735">
    <property type="term" value="F:structural constituent of ribosome"/>
    <property type="evidence" value="ECO:0007669"/>
    <property type="project" value="InterPro"/>
</dbReference>
<dbReference type="GO" id="GO:0006412">
    <property type="term" value="P:translation"/>
    <property type="evidence" value="ECO:0007669"/>
    <property type="project" value="UniProtKB-UniRule"/>
</dbReference>
<dbReference type="Gene3D" id="1.10.150.20">
    <property type="entry name" value="5' to 3' exonuclease, C-terminal subdomain"/>
    <property type="match status" value="1"/>
</dbReference>
<dbReference type="HAMAP" id="MF_01363">
    <property type="entry name" value="Ribosomal_bL21"/>
    <property type="match status" value="1"/>
</dbReference>
<dbReference type="InterPro" id="IPR028909">
    <property type="entry name" value="bL21-like"/>
</dbReference>
<dbReference type="InterPro" id="IPR036164">
    <property type="entry name" value="bL21-like_sf"/>
</dbReference>
<dbReference type="InterPro" id="IPR025567">
    <property type="entry name" value="DUF4332"/>
</dbReference>
<dbReference type="InterPro" id="IPR001787">
    <property type="entry name" value="Ribosomal_bL21"/>
</dbReference>
<dbReference type="NCBIfam" id="TIGR00061">
    <property type="entry name" value="L21"/>
    <property type="match status" value="1"/>
</dbReference>
<dbReference type="NCBIfam" id="NF008916">
    <property type="entry name" value="PRK12278.1-4"/>
    <property type="match status" value="1"/>
</dbReference>
<dbReference type="PANTHER" id="PTHR21349">
    <property type="entry name" value="50S RIBOSOMAL PROTEIN L21"/>
    <property type="match status" value="1"/>
</dbReference>
<dbReference type="PANTHER" id="PTHR21349:SF0">
    <property type="entry name" value="LARGE RIBOSOMAL SUBUNIT PROTEIN BL21M"/>
    <property type="match status" value="1"/>
</dbReference>
<dbReference type="Pfam" id="PF14229">
    <property type="entry name" value="DUF4332"/>
    <property type="match status" value="1"/>
</dbReference>
<dbReference type="Pfam" id="PF00829">
    <property type="entry name" value="Ribosomal_L21p"/>
    <property type="match status" value="1"/>
</dbReference>
<dbReference type="SUPFAM" id="SSF141091">
    <property type="entry name" value="L21p-like"/>
    <property type="match status" value="1"/>
</dbReference>
<feature type="chain" id="PRO_0000270685" description="Large ribosomal subunit protein bL21">
    <location>
        <begin position="1"/>
        <end position="220"/>
    </location>
</feature>
<feature type="region of interest" description="Disordered" evidence="2">
    <location>
        <begin position="109"/>
        <end position="158"/>
    </location>
</feature>
<feature type="compositionally biased region" description="Basic and acidic residues" evidence="2">
    <location>
        <begin position="118"/>
        <end position="146"/>
    </location>
</feature>
<protein>
    <recommendedName>
        <fullName evidence="1">Large ribosomal subunit protein bL21</fullName>
    </recommendedName>
    <alternativeName>
        <fullName evidence="3">50S ribosomal protein L21</fullName>
    </alternativeName>
</protein>
<sequence>MFAVIKTGGKQYRVAANDTLLIERIAGEVGEIVQIGNVLAVGEGENVTIGAPFVEGASVAAEVVEQGRGPKVIAFKKRRRQNSRRKRGHRQLLTTVRIAEILLDGAKPSKKVAAKPATSEEKAAEEKPAKAKKEAAEKGASPRETKAAPLFSAPEGEPDNLTVIKGIGPVAAGQLKEQGLTTFAQLAALSDEDIARIDEAMPFSTDQIKDWREQAKEVAK</sequence>
<reference key="1">
    <citation type="submission" date="2006-06" db="EMBL/GenBank/DDBJ databases">
        <title>Complete sequence of chromosome of Mesorhizobium sp. BNC1.</title>
        <authorList>
            <consortium name="US DOE Joint Genome Institute"/>
            <person name="Copeland A."/>
            <person name="Lucas S."/>
            <person name="Lapidus A."/>
            <person name="Barry K."/>
            <person name="Detter J.C."/>
            <person name="Glavina del Rio T."/>
            <person name="Hammon N."/>
            <person name="Israni S."/>
            <person name="Dalin E."/>
            <person name="Tice H."/>
            <person name="Pitluck S."/>
            <person name="Chertkov O."/>
            <person name="Brettin T."/>
            <person name="Bruce D."/>
            <person name="Han C."/>
            <person name="Tapia R."/>
            <person name="Gilna P."/>
            <person name="Schmutz J."/>
            <person name="Larimer F."/>
            <person name="Land M."/>
            <person name="Hauser L."/>
            <person name="Kyrpides N."/>
            <person name="Mikhailova N."/>
            <person name="Richardson P."/>
        </authorList>
    </citation>
    <scope>NUCLEOTIDE SEQUENCE [LARGE SCALE GENOMIC DNA]</scope>
    <source>
        <strain>BNC1</strain>
    </source>
</reference>
<organism>
    <name type="scientific">Chelativorans sp. (strain BNC1)</name>
    <dbReference type="NCBI Taxonomy" id="266779"/>
    <lineage>
        <taxon>Bacteria</taxon>
        <taxon>Pseudomonadati</taxon>
        <taxon>Pseudomonadota</taxon>
        <taxon>Alphaproteobacteria</taxon>
        <taxon>Hyphomicrobiales</taxon>
        <taxon>Phyllobacteriaceae</taxon>
        <taxon>Chelativorans</taxon>
    </lineage>
</organism>
<accession>Q11CP3</accession>